<dbReference type="EMBL" id="AE008691">
    <property type="protein sequence ID" value="AAM25408.1"/>
    <property type="molecule type" value="Genomic_DNA"/>
</dbReference>
<dbReference type="RefSeq" id="WP_011026311.1">
    <property type="nucleotide sequence ID" value="NZ_JANUCV010000001.1"/>
</dbReference>
<dbReference type="SMR" id="Q8R7Y1"/>
<dbReference type="STRING" id="273068.TTE2264"/>
<dbReference type="KEGG" id="tte:TTE2264"/>
<dbReference type="eggNOG" id="COG0522">
    <property type="taxonomic scope" value="Bacteria"/>
</dbReference>
<dbReference type="HOGENOM" id="CLU_092403_0_2_9"/>
<dbReference type="OrthoDB" id="9803672at2"/>
<dbReference type="Proteomes" id="UP000000555">
    <property type="component" value="Chromosome"/>
</dbReference>
<dbReference type="GO" id="GO:0015935">
    <property type="term" value="C:small ribosomal subunit"/>
    <property type="evidence" value="ECO:0007669"/>
    <property type="project" value="InterPro"/>
</dbReference>
<dbReference type="GO" id="GO:0019843">
    <property type="term" value="F:rRNA binding"/>
    <property type="evidence" value="ECO:0007669"/>
    <property type="project" value="UniProtKB-UniRule"/>
</dbReference>
<dbReference type="GO" id="GO:0003735">
    <property type="term" value="F:structural constituent of ribosome"/>
    <property type="evidence" value="ECO:0007669"/>
    <property type="project" value="InterPro"/>
</dbReference>
<dbReference type="GO" id="GO:0042274">
    <property type="term" value="P:ribosomal small subunit biogenesis"/>
    <property type="evidence" value="ECO:0007669"/>
    <property type="project" value="TreeGrafter"/>
</dbReference>
<dbReference type="GO" id="GO:0006412">
    <property type="term" value="P:translation"/>
    <property type="evidence" value="ECO:0007669"/>
    <property type="project" value="UniProtKB-UniRule"/>
</dbReference>
<dbReference type="CDD" id="cd00165">
    <property type="entry name" value="S4"/>
    <property type="match status" value="1"/>
</dbReference>
<dbReference type="FunFam" id="1.10.1050.10:FF:000001">
    <property type="entry name" value="30S ribosomal protein S4"/>
    <property type="match status" value="1"/>
</dbReference>
<dbReference type="FunFam" id="3.10.290.10:FF:000001">
    <property type="entry name" value="30S ribosomal protein S4"/>
    <property type="match status" value="1"/>
</dbReference>
<dbReference type="Gene3D" id="1.10.1050.10">
    <property type="entry name" value="Ribosomal Protein S4 Delta 41, Chain A, domain 1"/>
    <property type="match status" value="1"/>
</dbReference>
<dbReference type="Gene3D" id="3.10.290.10">
    <property type="entry name" value="RNA-binding S4 domain"/>
    <property type="match status" value="1"/>
</dbReference>
<dbReference type="HAMAP" id="MF_01306_B">
    <property type="entry name" value="Ribosomal_uS4_B"/>
    <property type="match status" value="1"/>
</dbReference>
<dbReference type="InterPro" id="IPR022801">
    <property type="entry name" value="Ribosomal_uS4"/>
</dbReference>
<dbReference type="InterPro" id="IPR005709">
    <property type="entry name" value="Ribosomal_uS4_bac-type"/>
</dbReference>
<dbReference type="InterPro" id="IPR018079">
    <property type="entry name" value="Ribosomal_uS4_CS"/>
</dbReference>
<dbReference type="InterPro" id="IPR001912">
    <property type="entry name" value="Ribosomal_uS4_N"/>
</dbReference>
<dbReference type="InterPro" id="IPR002942">
    <property type="entry name" value="S4_RNA-bd"/>
</dbReference>
<dbReference type="InterPro" id="IPR036986">
    <property type="entry name" value="S4_RNA-bd_sf"/>
</dbReference>
<dbReference type="NCBIfam" id="NF003717">
    <property type="entry name" value="PRK05327.1"/>
    <property type="match status" value="1"/>
</dbReference>
<dbReference type="NCBIfam" id="TIGR01017">
    <property type="entry name" value="rpsD_bact"/>
    <property type="match status" value="1"/>
</dbReference>
<dbReference type="PANTHER" id="PTHR11831">
    <property type="entry name" value="30S 40S RIBOSOMAL PROTEIN"/>
    <property type="match status" value="1"/>
</dbReference>
<dbReference type="PANTHER" id="PTHR11831:SF4">
    <property type="entry name" value="SMALL RIBOSOMAL SUBUNIT PROTEIN US4M"/>
    <property type="match status" value="1"/>
</dbReference>
<dbReference type="Pfam" id="PF00163">
    <property type="entry name" value="Ribosomal_S4"/>
    <property type="match status" value="1"/>
</dbReference>
<dbReference type="Pfam" id="PF01479">
    <property type="entry name" value="S4"/>
    <property type="match status" value="1"/>
</dbReference>
<dbReference type="SMART" id="SM01390">
    <property type="entry name" value="Ribosomal_S4"/>
    <property type="match status" value="1"/>
</dbReference>
<dbReference type="SMART" id="SM00363">
    <property type="entry name" value="S4"/>
    <property type="match status" value="1"/>
</dbReference>
<dbReference type="SUPFAM" id="SSF55174">
    <property type="entry name" value="Alpha-L RNA-binding motif"/>
    <property type="match status" value="1"/>
</dbReference>
<dbReference type="PROSITE" id="PS00632">
    <property type="entry name" value="RIBOSOMAL_S4"/>
    <property type="match status" value="1"/>
</dbReference>
<dbReference type="PROSITE" id="PS50889">
    <property type="entry name" value="S4"/>
    <property type="match status" value="1"/>
</dbReference>
<comment type="function">
    <text evidence="1">One of the primary rRNA binding proteins, it binds directly to 16S rRNA where it nucleates assembly of the body of the 30S subunit.</text>
</comment>
<comment type="function">
    <text evidence="1">With S5 and S12 plays an important role in translational accuracy.</text>
</comment>
<comment type="subunit">
    <text evidence="1">Part of the 30S ribosomal subunit. Contacts protein S5. The interaction surface between S4 and S5 is involved in control of translational fidelity.</text>
</comment>
<comment type="similarity">
    <text evidence="1">Belongs to the universal ribosomal protein uS4 family.</text>
</comment>
<feature type="chain" id="PRO_0000132484" description="Small ribosomal subunit protein uS4">
    <location>
        <begin position="1"/>
        <end position="206"/>
    </location>
</feature>
<feature type="domain" description="S4 RNA-binding" evidence="1">
    <location>
        <begin position="98"/>
        <end position="161"/>
    </location>
</feature>
<organism>
    <name type="scientific">Caldanaerobacter subterraneus subsp. tengcongensis (strain DSM 15242 / JCM 11007 / NBRC 100824 / MB4)</name>
    <name type="common">Thermoanaerobacter tengcongensis</name>
    <dbReference type="NCBI Taxonomy" id="273068"/>
    <lineage>
        <taxon>Bacteria</taxon>
        <taxon>Bacillati</taxon>
        <taxon>Bacillota</taxon>
        <taxon>Clostridia</taxon>
        <taxon>Thermoanaerobacterales</taxon>
        <taxon>Thermoanaerobacteraceae</taxon>
        <taxon>Caldanaerobacter</taxon>
    </lineage>
</organism>
<gene>
    <name evidence="1" type="primary">rpsD</name>
    <name type="ordered locus">TTE2264</name>
</gene>
<sequence>MGRYLGPSCRLCRREGIKLYLKGEKCYTDKCPLAKRGYAPGQHGQEKKKLTQYGMQLREKQKLKRYYGILERQFVRYYERAERMRGITGENLLQLLERRLDNVVYRLGFAVSRAQARQLVSHGHIEVNGKKVDIPSYLVKPGDVISVKESSRSMELIKNNLEMGRNVPDWLELNKDAFEGRVVSLPRREHIDLPVQEHLIVELYSK</sequence>
<keyword id="KW-1185">Reference proteome</keyword>
<keyword id="KW-0687">Ribonucleoprotein</keyword>
<keyword id="KW-0689">Ribosomal protein</keyword>
<keyword id="KW-0694">RNA-binding</keyword>
<keyword id="KW-0699">rRNA-binding</keyword>
<reference key="1">
    <citation type="journal article" date="2002" name="Genome Res.">
        <title>A complete sequence of the T. tengcongensis genome.</title>
        <authorList>
            <person name="Bao Q."/>
            <person name="Tian Y."/>
            <person name="Li W."/>
            <person name="Xu Z."/>
            <person name="Xuan Z."/>
            <person name="Hu S."/>
            <person name="Dong W."/>
            <person name="Yang J."/>
            <person name="Chen Y."/>
            <person name="Xue Y."/>
            <person name="Xu Y."/>
            <person name="Lai X."/>
            <person name="Huang L."/>
            <person name="Dong X."/>
            <person name="Ma Y."/>
            <person name="Ling L."/>
            <person name="Tan H."/>
            <person name="Chen R."/>
            <person name="Wang J."/>
            <person name="Yu J."/>
            <person name="Yang H."/>
        </authorList>
    </citation>
    <scope>NUCLEOTIDE SEQUENCE [LARGE SCALE GENOMIC DNA]</scope>
    <source>
        <strain>DSM 15242 / JCM 11007 / NBRC 100824 / MB4</strain>
    </source>
</reference>
<evidence type="ECO:0000255" key="1">
    <source>
        <dbReference type="HAMAP-Rule" id="MF_01306"/>
    </source>
</evidence>
<evidence type="ECO:0000305" key="2"/>
<accession>Q8R7Y1</accession>
<proteinExistence type="inferred from homology"/>
<protein>
    <recommendedName>
        <fullName evidence="1">Small ribosomal subunit protein uS4</fullName>
    </recommendedName>
    <alternativeName>
        <fullName evidence="2">30S ribosomal protein S4</fullName>
    </alternativeName>
</protein>
<name>RS4_CALS4</name>